<organism>
    <name type="scientific">Streptococcus equi subsp. zooepidemicus (strain MGCS10565)</name>
    <dbReference type="NCBI Taxonomy" id="552526"/>
    <lineage>
        <taxon>Bacteria</taxon>
        <taxon>Bacillati</taxon>
        <taxon>Bacillota</taxon>
        <taxon>Bacilli</taxon>
        <taxon>Lactobacillales</taxon>
        <taxon>Streptococcaceae</taxon>
        <taxon>Streptococcus</taxon>
    </lineage>
</organism>
<feature type="chain" id="PRO_1000199744" description="UPF0371 protein Sez_1293">
    <location>
        <begin position="1"/>
        <end position="494"/>
    </location>
</feature>
<name>Y1293_STREM</name>
<proteinExistence type="inferred from homology"/>
<reference key="1">
    <citation type="journal article" date="2008" name="PLoS ONE">
        <title>Genome sequence of a lancefield group C Streptococcus zooepidemicus strain causing epidemic nephritis: new information about an old disease.</title>
        <authorList>
            <person name="Beres S.B."/>
            <person name="Sesso R."/>
            <person name="Pinto S.W.L."/>
            <person name="Hoe N.P."/>
            <person name="Porcella S.F."/>
            <person name="Deleo F.R."/>
            <person name="Musser J.M."/>
        </authorList>
    </citation>
    <scope>NUCLEOTIDE SEQUENCE [LARGE SCALE GENOMIC DNA]</scope>
    <source>
        <strain>MGCS10565</strain>
    </source>
</reference>
<comment type="similarity">
    <text evidence="1">Belongs to the UPF0371 family.</text>
</comment>
<accession>B4U3R2</accession>
<protein>
    <recommendedName>
        <fullName evidence="1">UPF0371 protein Sez_1293</fullName>
    </recommendedName>
</protein>
<evidence type="ECO:0000255" key="1">
    <source>
        <dbReference type="HAMAP-Rule" id="MF_01567"/>
    </source>
</evidence>
<dbReference type="EMBL" id="CP001129">
    <property type="protein sequence ID" value="ACG62629.1"/>
    <property type="molecule type" value="Genomic_DNA"/>
</dbReference>
<dbReference type="RefSeq" id="WP_012515894.1">
    <property type="nucleotide sequence ID" value="NC_011134.1"/>
</dbReference>
<dbReference type="SMR" id="B4U3R2"/>
<dbReference type="KEGG" id="sez:Sez_1293"/>
<dbReference type="HOGENOM" id="CLU_046981_0_0_9"/>
<dbReference type="Proteomes" id="UP000001873">
    <property type="component" value="Chromosome"/>
</dbReference>
<dbReference type="Gene3D" id="1.20.1570.10">
    <property type="entry name" value="dip2346 domain like"/>
    <property type="match status" value="1"/>
</dbReference>
<dbReference type="Gene3D" id="3.10.630.10">
    <property type="entry name" value="dip2346 domain like"/>
    <property type="match status" value="1"/>
</dbReference>
<dbReference type="Gene3D" id="3.40.140.40">
    <property type="entry name" value="Domain of unknown function (DUF1846), C-terminal subdomain"/>
    <property type="match status" value="1"/>
</dbReference>
<dbReference type="HAMAP" id="MF_01567">
    <property type="entry name" value="UPF0371"/>
    <property type="match status" value="1"/>
</dbReference>
<dbReference type="InterPro" id="IPR014999">
    <property type="entry name" value="DUF1846"/>
</dbReference>
<dbReference type="InterPro" id="IPR048441">
    <property type="entry name" value="DUF1846_C"/>
</dbReference>
<dbReference type="InterPro" id="IPR048496">
    <property type="entry name" value="DUF1846_N"/>
</dbReference>
<dbReference type="NCBIfam" id="NF010184">
    <property type="entry name" value="PRK13663.1"/>
    <property type="match status" value="1"/>
</dbReference>
<dbReference type="Pfam" id="PF08903">
    <property type="entry name" value="DUF1846"/>
    <property type="match status" value="1"/>
</dbReference>
<dbReference type="Pfam" id="PF20921">
    <property type="entry name" value="DUF1846_C"/>
    <property type="match status" value="1"/>
</dbReference>
<dbReference type="PIRSF" id="PIRSF033132">
    <property type="entry name" value="DUF1846"/>
    <property type="match status" value="1"/>
</dbReference>
<gene>
    <name type="ordered locus">Sez_1293</name>
</gene>
<sequence>MKNIAFDSNKYLSLQRNHILERIKQFDGKLYMEFGGKMLEDFHAARVLPGYEPDNKIKLLKELKDQVEIVITINANNIEHSKTRGDLGISYDQEVLRLIDTFNALDIYVGSVVITQYNHQAAADHFQKQLAKNGITSYRHYPIKGYPTDINHIISPEGMGRNDYIKTSRNLIVVTAPGPGSGKLATCISQLYHDQLNGITSGYAKFETFPVWNLPLHHPVNLAYEAATADLDDVNMIDPFHLEAYGKTAVNYNRDIEVFPVLNRTFERILSQSPYASPTDMGVNMVGFSIVNEEAAIEASKQEIIRRYYQTLVDFKAERVTETAVKKLELLMNDIGVTPKDRQVTLIARQKAELTGQPALALQLPNGQVVTGKTSDLFGPTAAVIINAIKTLAHISKETHLIEPEYVKPIQGLKINHLGSHNPRLHANEILMALAITAMNNNQADLAMKELGNLKGSEAHSTVILTNEDKHALRQLGINVTFDPVYQHHKLYRS</sequence>